<comment type="function">
    <text evidence="1">Multidrug efflux pump that functions probably as a Na(+)/drug antiporter.</text>
</comment>
<comment type="subcellular location">
    <subcellularLocation>
        <location evidence="1">Cell inner membrane</location>
        <topology evidence="1">Multi-pass membrane protein</topology>
    </subcellularLocation>
</comment>
<comment type="similarity">
    <text evidence="1">Belongs to the multi antimicrobial extrusion (MATE) (TC 2.A.66.1) family. MdtK subfamily.</text>
</comment>
<accession>B7L5L6</accession>
<dbReference type="EMBL" id="CU928145">
    <property type="protein sequence ID" value="CAU97690.1"/>
    <property type="molecule type" value="Genomic_DNA"/>
</dbReference>
<dbReference type="RefSeq" id="WP_001174942.1">
    <property type="nucleotide sequence ID" value="NC_011748.1"/>
</dbReference>
<dbReference type="SMR" id="B7L5L6"/>
<dbReference type="GeneID" id="75204509"/>
<dbReference type="KEGG" id="eck:EC55989_1831"/>
<dbReference type="HOGENOM" id="CLU_012893_6_0_6"/>
<dbReference type="Proteomes" id="UP000000746">
    <property type="component" value="Chromosome"/>
</dbReference>
<dbReference type="GO" id="GO:0005886">
    <property type="term" value="C:plasma membrane"/>
    <property type="evidence" value="ECO:0007669"/>
    <property type="project" value="UniProtKB-SubCell"/>
</dbReference>
<dbReference type="GO" id="GO:0015297">
    <property type="term" value="F:antiporter activity"/>
    <property type="evidence" value="ECO:0007669"/>
    <property type="project" value="UniProtKB-UniRule"/>
</dbReference>
<dbReference type="GO" id="GO:0042910">
    <property type="term" value="F:xenobiotic transmembrane transporter activity"/>
    <property type="evidence" value="ECO:0007669"/>
    <property type="project" value="UniProtKB-UniRule"/>
</dbReference>
<dbReference type="GO" id="GO:0006814">
    <property type="term" value="P:sodium ion transport"/>
    <property type="evidence" value="ECO:0007669"/>
    <property type="project" value="UniProtKB-UniRule"/>
</dbReference>
<dbReference type="GO" id="GO:0006855">
    <property type="term" value="P:xenobiotic transmembrane transport"/>
    <property type="evidence" value="ECO:0007669"/>
    <property type="project" value="UniProtKB-UniRule"/>
</dbReference>
<dbReference type="CDD" id="cd13131">
    <property type="entry name" value="MATE_NorM_like"/>
    <property type="match status" value="1"/>
</dbReference>
<dbReference type="HAMAP" id="MF_00400">
    <property type="entry name" value="MdtK"/>
    <property type="match status" value="1"/>
</dbReference>
<dbReference type="InterPro" id="IPR002528">
    <property type="entry name" value="MATE_fam"/>
</dbReference>
<dbReference type="InterPro" id="IPR050222">
    <property type="entry name" value="MATE_MdtK"/>
</dbReference>
<dbReference type="InterPro" id="IPR048279">
    <property type="entry name" value="MdtK-like"/>
</dbReference>
<dbReference type="InterPro" id="IPR022913">
    <property type="entry name" value="Multidrug-R_MdtK"/>
</dbReference>
<dbReference type="NCBIfam" id="TIGR00797">
    <property type="entry name" value="matE"/>
    <property type="match status" value="1"/>
</dbReference>
<dbReference type="PANTHER" id="PTHR43298:SF2">
    <property type="entry name" value="FMN_FAD EXPORTER YEEO-RELATED"/>
    <property type="match status" value="1"/>
</dbReference>
<dbReference type="PANTHER" id="PTHR43298">
    <property type="entry name" value="MULTIDRUG RESISTANCE PROTEIN NORM-RELATED"/>
    <property type="match status" value="1"/>
</dbReference>
<dbReference type="Pfam" id="PF01554">
    <property type="entry name" value="MatE"/>
    <property type="match status" value="2"/>
</dbReference>
<dbReference type="PIRSF" id="PIRSF006603">
    <property type="entry name" value="DinF"/>
    <property type="match status" value="1"/>
</dbReference>
<name>MDTK_ECO55</name>
<feature type="chain" id="PRO_1000134544" description="Multidrug resistance protein MdtK">
    <location>
        <begin position="1"/>
        <end position="457"/>
    </location>
</feature>
<feature type="transmembrane region" description="Helical" evidence="1">
    <location>
        <begin position="11"/>
        <end position="31"/>
    </location>
</feature>
<feature type="transmembrane region" description="Helical" evidence="1">
    <location>
        <begin position="53"/>
        <end position="73"/>
    </location>
</feature>
<feature type="transmembrane region" description="Helical" evidence="1">
    <location>
        <begin position="93"/>
        <end position="113"/>
    </location>
</feature>
<feature type="transmembrane region" description="Helical" evidence="1">
    <location>
        <begin position="127"/>
        <end position="147"/>
    </location>
</feature>
<feature type="transmembrane region" description="Helical" evidence="1">
    <location>
        <begin position="160"/>
        <end position="180"/>
    </location>
</feature>
<feature type="transmembrane region" description="Helical" evidence="1">
    <location>
        <begin position="189"/>
        <end position="209"/>
    </location>
</feature>
<feature type="transmembrane region" description="Helical" evidence="1">
    <location>
        <begin position="243"/>
        <end position="263"/>
    </location>
</feature>
<feature type="transmembrane region" description="Helical" evidence="1">
    <location>
        <begin position="276"/>
        <end position="296"/>
    </location>
</feature>
<feature type="transmembrane region" description="Helical" evidence="1">
    <location>
        <begin position="314"/>
        <end position="334"/>
    </location>
</feature>
<feature type="transmembrane region" description="Helical" evidence="1">
    <location>
        <begin position="350"/>
        <end position="370"/>
    </location>
</feature>
<feature type="transmembrane region" description="Helical" evidence="1">
    <location>
        <begin position="387"/>
        <end position="407"/>
    </location>
</feature>
<feature type="transmembrane region" description="Helical" evidence="1">
    <location>
        <begin position="418"/>
        <end position="438"/>
    </location>
</feature>
<evidence type="ECO:0000255" key="1">
    <source>
        <dbReference type="HAMAP-Rule" id="MF_00400"/>
    </source>
</evidence>
<keyword id="KW-0050">Antiport</keyword>
<keyword id="KW-0997">Cell inner membrane</keyword>
<keyword id="KW-1003">Cell membrane</keyword>
<keyword id="KW-0406">Ion transport</keyword>
<keyword id="KW-0472">Membrane</keyword>
<keyword id="KW-1185">Reference proteome</keyword>
<keyword id="KW-0915">Sodium</keyword>
<keyword id="KW-0739">Sodium transport</keyword>
<keyword id="KW-0812">Transmembrane</keyword>
<keyword id="KW-1133">Transmembrane helix</keyword>
<keyword id="KW-0813">Transport</keyword>
<reference key="1">
    <citation type="journal article" date="2009" name="PLoS Genet.">
        <title>Organised genome dynamics in the Escherichia coli species results in highly diverse adaptive paths.</title>
        <authorList>
            <person name="Touchon M."/>
            <person name="Hoede C."/>
            <person name="Tenaillon O."/>
            <person name="Barbe V."/>
            <person name="Baeriswyl S."/>
            <person name="Bidet P."/>
            <person name="Bingen E."/>
            <person name="Bonacorsi S."/>
            <person name="Bouchier C."/>
            <person name="Bouvet O."/>
            <person name="Calteau A."/>
            <person name="Chiapello H."/>
            <person name="Clermont O."/>
            <person name="Cruveiller S."/>
            <person name="Danchin A."/>
            <person name="Diard M."/>
            <person name="Dossat C."/>
            <person name="Karoui M.E."/>
            <person name="Frapy E."/>
            <person name="Garry L."/>
            <person name="Ghigo J.M."/>
            <person name="Gilles A.M."/>
            <person name="Johnson J."/>
            <person name="Le Bouguenec C."/>
            <person name="Lescat M."/>
            <person name="Mangenot S."/>
            <person name="Martinez-Jehanne V."/>
            <person name="Matic I."/>
            <person name="Nassif X."/>
            <person name="Oztas S."/>
            <person name="Petit M.A."/>
            <person name="Pichon C."/>
            <person name="Rouy Z."/>
            <person name="Ruf C.S."/>
            <person name="Schneider D."/>
            <person name="Tourret J."/>
            <person name="Vacherie B."/>
            <person name="Vallenet D."/>
            <person name="Medigue C."/>
            <person name="Rocha E.P.C."/>
            <person name="Denamur E."/>
        </authorList>
    </citation>
    <scope>NUCLEOTIDE SEQUENCE [LARGE SCALE GENOMIC DNA]</scope>
    <source>
        <strain>55989 / EAEC</strain>
    </source>
</reference>
<proteinExistence type="inferred from homology"/>
<sequence length="457" mass="49475">MQKYISEARLLLALAIPVILAQIAQTAMGFVDTVMAGGYSATDMAAVAIGTSIWLPAILFGHGLLLALTPVIAQLNGSGRRERIAHQVRQGFWLAGFVSVLIMLVLWNAGYIIRSMENIDPALADKAVGYLRALLWGAPGYLFFQVARNQCEGLAKTKPGMVMGFIGLLVNIPVNYIFIYGHFGMPELGGVGCGVATAAVYWVMFLAMVSYIKRARSMRDIRNEKGTAKPDPAVMKRLIQLGLPIALALFFEVTLFAVVALLVSPLGIVDVAGHQIALNFSSLMFVLPMSLAAAVTIRVGYRLGQGSTLDAQTAARTGLMVGVCMATLTAIFTVSLREQIALLYNDNPEVVTLAAHLMLLAAVYQISDSIQVIGSGILRGYKDTRSIFYITFTAYWVLGLPSGYILALTDLVVEPMGPAGFWIGFIIGLTSAAIMMMLRMRFLQRLPSVIILQRASR</sequence>
<gene>
    <name evidence="1" type="primary">mdtK</name>
    <name type="ordered locus">EC55989_1831</name>
</gene>
<organism>
    <name type="scientific">Escherichia coli (strain 55989 / EAEC)</name>
    <dbReference type="NCBI Taxonomy" id="585055"/>
    <lineage>
        <taxon>Bacteria</taxon>
        <taxon>Pseudomonadati</taxon>
        <taxon>Pseudomonadota</taxon>
        <taxon>Gammaproteobacteria</taxon>
        <taxon>Enterobacterales</taxon>
        <taxon>Enterobacteriaceae</taxon>
        <taxon>Escherichia</taxon>
    </lineage>
</organism>
<protein>
    <recommendedName>
        <fullName evidence="1">Multidrug resistance protein MdtK</fullName>
    </recommendedName>
    <alternativeName>
        <fullName evidence="1">Multidrug-efflux transporter</fullName>
    </alternativeName>
</protein>